<evidence type="ECO:0000255" key="1">
    <source>
        <dbReference type="HAMAP-Rule" id="MF_00366"/>
    </source>
</evidence>
<gene>
    <name evidence="1" type="primary">rpoZ</name>
    <name type="ordered locus">Xfasm12_0842</name>
</gene>
<dbReference type="EC" id="2.7.7.6" evidence="1"/>
<dbReference type="EMBL" id="CP000941">
    <property type="protein sequence ID" value="ACA11830.1"/>
    <property type="molecule type" value="Genomic_DNA"/>
</dbReference>
<dbReference type="RefSeq" id="WP_004083700.1">
    <property type="nucleotide sequence ID" value="NC_010513.1"/>
</dbReference>
<dbReference type="SMR" id="B0U6W4"/>
<dbReference type="KEGG" id="xfm:Xfasm12_0842"/>
<dbReference type="HOGENOM" id="CLU_125406_5_3_6"/>
<dbReference type="GO" id="GO:0000428">
    <property type="term" value="C:DNA-directed RNA polymerase complex"/>
    <property type="evidence" value="ECO:0007669"/>
    <property type="project" value="UniProtKB-KW"/>
</dbReference>
<dbReference type="GO" id="GO:0003677">
    <property type="term" value="F:DNA binding"/>
    <property type="evidence" value="ECO:0007669"/>
    <property type="project" value="UniProtKB-UniRule"/>
</dbReference>
<dbReference type="GO" id="GO:0003899">
    <property type="term" value="F:DNA-directed RNA polymerase activity"/>
    <property type="evidence" value="ECO:0007669"/>
    <property type="project" value="UniProtKB-UniRule"/>
</dbReference>
<dbReference type="GO" id="GO:0006351">
    <property type="term" value="P:DNA-templated transcription"/>
    <property type="evidence" value="ECO:0007669"/>
    <property type="project" value="UniProtKB-UniRule"/>
</dbReference>
<dbReference type="Gene3D" id="3.90.940.10">
    <property type="match status" value="1"/>
</dbReference>
<dbReference type="HAMAP" id="MF_00366">
    <property type="entry name" value="RNApol_bact_RpoZ"/>
    <property type="match status" value="1"/>
</dbReference>
<dbReference type="InterPro" id="IPR003716">
    <property type="entry name" value="DNA-dir_RNA_pol_omega"/>
</dbReference>
<dbReference type="InterPro" id="IPR006110">
    <property type="entry name" value="Pol_omega/Rpo6/RPB6"/>
</dbReference>
<dbReference type="InterPro" id="IPR036161">
    <property type="entry name" value="RPB6/omega-like_sf"/>
</dbReference>
<dbReference type="NCBIfam" id="TIGR00690">
    <property type="entry name" value="rpoZ"/>
    <property type="match status" value="1"/>
</dbReference>
<dbReference type="PANTHER" id="PTHR34476">
    <property type="entry name" value="DNA-DIRECTED RNA POLYMERASE SUBUNIT OMEGA"/>
    <property type="match status" value="1"/>
</dbReference>
<dbReference type="PANTHER" id="PTHR34476:SF1">
    <property type="entry name" value="DNA-DIRECTED RNA POLYMERASE SUBUNIT OMEGA"/>
    <property type="match status" value="1"/>
</dbReference>
<dbReference type="Pfam" id="PF01192">
    <property type="entry name" value="RNA_pol_Rpb6"/>
    <property type="match status" value="1"/>
</dbReference>
<dbReference type="SMART" id="SM01409">
    <property type="entry name" value="RNA_pol_Rpb6"/>
    <property type="match status" value="1"/>
</dbReference>
<dbReference type="SUPFAM" id="SSF63562">
    <property type="entry name" value="RPB6/omega subunit-like"/>
    <property type="match status" value="1"/>
</dbReference>
<organism>
    <name type="scientific">Xylella fastidiosa (strain M12)</name>
    <dbReference type="NCBI Taxonomy" id="405440"/>
    <lineage>
        <taxon>Bacteria</taxon>
        <taxon>Pseudomonadati</taxon>
        <taxon>Pseudomonadota</taxon>
        <taxon>Gammaproteobacteria</taxon>
        <taxon>Lysobacterales</taxon>
        <taxon>Lysobacteraceae</taxon>
        <taxon>Xylella</taxon>
    </lineage>
</organism>
<protein>
    <recommendedName>
        <fullName evidence="1">DNA-directed RNA polymerase subunit omega</fullName>
        <shortName evidence="1">RNAP omega subunit</shortName>
        <ecNumber evidence="1">2.7.7.6</ecNumber>
    </recommendedName>
    <alternativeName>
        <fullName evidence="1">RNA polymerase omega subunit</fullName>
    </alternativeName>
    <alternativeName>
        <fullName evidence="1">Transcriptase subunit omega</fullName>
    </alternativeName>
</protein>
<proteinExistence type="inferred from homology"/>
<sequence>MARITVEDCLEVVNNRFELVMMASKRARQLANGVPPLIENNSEDKPTVLALREIAARKINSKMIDEIEKAERERTEREAMEWAAAEVVADEDISKSDD</sequence>
<accession>B0U6W4</accession>
<keyword id="KW-0240">DNA-directed RNA polymerase</keyword>
<keyword id="KW-0548">Nucleotidyltransferase</keyword>
<keyword id="KW-0804">Transcription</keyword>
<keyword id="KW-0808">Transferase</keyword>
<reference key="1">
    <citation type="journal article" date="2010" name="J. Bacteriol.">
        <title>Whole genome sequences of two Xylella fastidiosa strains (M12 and M23) causing almond leaf scorch disease in California.</title>
        <authorList>
            <person name="Chen J."/>
            <person name="Xie G."/>
            <person name="Han S."/>
            <person name="Chertkov O."/>
            <person name="Sims D."/>
            <person name="Civerolo E.L."/>
        </authorList>
    </citation>
    <scope>NUCLEOTIDE SEQUENCE [LARGE SCALE GENOMIC DNA]</scope>
    <source>
        <strain>M12</strain>
    </source>
</reference>
<comment type="function">
    <text evidence="1">Promotes RNA polymerase assembly. Latches the N- and C-terminal regions of the beta' subunit thereby facilitating its interaction with the beta and alpha subunits.</text>
</comment>
<comment type="catalytic activity">
    <reaction evidence="1">
        <text>RNA(n) + a ribonucleoside 5'-triphosphate = RNA(n+1) + diphosphate</text>
        <dbReference type="Rhea" id="RHEA:21248"/>
        <dbReference type="Rhea" id="RHEA-COMP:14527"/>
        <dbReference type="Rhea" id="RHEA-COMP:17342"/>
        <dbReference type="ChEBI" id="CHEBI:33019"/>
        <dbReference type="ChEBI" id="CHEBI:61557"/>
        <dbReference type="ChEBI" id="CHEBI:140395"/>
        <dbReference type="EC" id="2.7.7.6"/>
    </reaction>
</comment>
<comment type="subunit">
    <text evidence="1">The RNAP catalytic core consists of 2 alpha, 1 beta, 1 beta' and 1 omega subunit. When a sigma factor is associated with the core the holoenzyme is formed, which can initiate transcription.</text>
</comment>
<comment type="similarity">
    <text evidence="1">Belongs to the RNA polymerase subunit omega family.</text>
</comment>
<feature type="chain" id="PRO_1000121292" description="DNA-directed RNA polymerase subunit omega">
    <location>
        <begin position="1"/>
        <end position="98"/>
    </location>
</feature>
<name>RPOZ_XYLFM</name>